<dbReference type="EMBL" id="AM933172">
    <property type="protein sequence ID" value="CAR34749.1"/>
    <property type="molecule type" value="Genomic_DNA"/>
</dbReference>
<dbReference type="RefSeq" id="WP_000382926.1">
    <property type="nucleotide sequence ID" value="NC_011294.1"/>
</dbReference>
<dbReference type="SMR" id="B5R0L3"/>
<dbReference type="KEGG" id="set:SEN3173"/>
<dbReference type="HOGENOM" id="CLU_017584_9_1_6"/>
<dbReference type="Proteomes" id="UP000000613">
    <property type="component" value="Chromosome"/>
</dbReference>
<dbReference type="GO" id="GO:0003677">
    <property type="term" value="F:DNA binding"/>
    <property type="evidence" value="ECO:0007669"/>
    <property type="project" value="UniProtKB-KW"/>
</dbReference>
<dbReference type="GO" id="GO:0003700">
    <property type="term" value="F:DNA-binding transcription factor activity"/>
    <property type="evidence" value="ECO:0007669"/>
    <property type="project" value="UniProtKB-UniRule"/>
</dbReference>
<dbReference type="GO" id="GO:0045892">
    <property type="term" value="P:negative regulation of DNA-templated transcription"/>
    <property type="evidence" value="ECO:0007669"/>
    <property type="project" value="UniProtKB-UniRule"/>
</dbReference>
<dbReference type="CDD" id="cd07377">
    <property type="entry name" value="WHTH_GntR"/>
    <property type="match status" value="1"/>
</dbReference>
<dbReference type="FunFam" id="1.10.10.10:FF:000150">
    <property type="entry name" value="HTH-type transcriptional repressor NanR"/>
    <property type="match status" value="1"/>
</dbReference>
<dbReference type="Gene3D" id="1.20.120.530">
    <property type="entry name" value="GntR ligand-binding domain-like"/>
    <property type="match status" value="1"/>
</dbReference>
<dbReference type="Gene3D" id="1.10.10.10">
    <property type="entry name" value="Winged helix-like DNA-binding domain superfamily/Winged helix DNA-binding domain"/>
    <property type="match status" value="1"/>
</dbReference>
<dbReference type="HAMAP" id="MF_01236">
    <property type="entry name" value="HTH_NanR"/>
    <property type="match status" value="1"/>
</dbReference>
<dbReference type="InterPro" id="IPR011711">
    <property type="entry name" value="GntR_C"/>
</dbReference>
<dbReference type="InterPro" id="IPR008920">
    <property type="entry name" value="TF_FadR/GntR_C"/>
</dbReference>
<dbReference type="InterPro" id="IPR000524">
    <property type="entry name" value="Tscrpt_reg_HTH_GntR"/>
</dbReference>
<dbReference type="InterPro" id="IPR023730">
    <property type="entry name" value="Tscrpt_reg_NanR"/>
</dbReference>
<dbReference type="InterPro" id="IPR036388">
    <property type="entry name" value="WH-like_DNA-bd_sf"/>
</dbReference>
<dbReference type="InterPro" id="IPR036390">
    <property type="entry name" value="WH_DNA-bd_sf"/>
</dbReference>
<dbReference type="NCBIfam" id="NF003011">
    <property type="entry name" value="PRK03837.1"/>
    <property type="match status" value="1"/>
</dbReference>
<dbReference type="PANTHER" id="PTHR43537:SF53">
    <property type="entry name" value="HTH-TYPE TRANSCRIPTIONAL REPRESSOR NANR"/>
    <property type="match status" value="1"/>
</dbReference>
<dbReference type="PANTHER" id="PTHR43537">
    <property type="entry name" value="TRANSCRIPTIONAL REGULATOR, GNTR FAMILY"/>
    <property type="match status" value="1"/>
</dbReference>
<dbReference type="Pfam" id="PF07729">
    <property type="entry name" value="FCD"/>
    <property type="match status" value="1"/>
</dbReference>
<dbReference type="Pfam" id="PF00392">
    <property type="entry name" value="GntR"/>
    <property type="match status" value="1"/>
</dbReference>
<dbReference type="PRINTS" id="PR00035">
    <property type="entry name" value="HTHGNTR"/>
</dbReference>
<dbReference type="SMART" id="SM00895">
    <property type="entry name" value="FCD"/>
    <property type="match status" value="1"/>
</dbReference>
<dbReference type="SMART" id="SM00345">
    <property type="entry name" value="HTH_GNTR"/>
    <property type="match status" value="1"/>
</dbReference>
<dbReference type="SUPFAM" id="SSF48008">
    <property type="entry name" value="GntR ligand-binding domain-like"/>
    <property type="match status" value="1"/>
</dbReference>
<dbReference type="SUPFAM" id="SSF46785">
    <property type="entry name" value="Winged helix' DNA-binding domain"/>
    <property type="match status" value="1"/>
</dbReference>
<dbReference type="PROSITE" id="PS50949">
    <property type="entry name" value="HTH_GNTR"/>
    <property type="match status" value="1"/>
</dbReference>
<proteinExistence type="inferred from homology"/>
<name>NANR_SALEP</name>
<comment type="function">
    <text evidence="1">Transcriptional repressor that controls expression of the genes required for the catabolism of sialic acids.</text>
</comment>
<comment type="similarity">
    <text evidence="1">Belongs to the NanR family.</text>
</comment>
<sequence>MDVMNAFDSQAEDSPTSLGRSLRRRPLARKKLSEMVEEELEQMIRRHEFGEGEQLPSERELMAFFNVGRPSVREALAALKRKGLVQINNGERARVSRPSADTIISELSGMAKDFLTHPGGIAHFEQLRLFFESSLVRYAAEHATDEQIALLTKALEINSQSLDDNALFIRSDVEFHRVLAEIPGNPIFMAIHVALLDWLIAARPSVPDRELHEHNNVSYQQHIVIVDAIRQRDPDKADRALQTHLNSVSATWHALGKKSQKMR</sequence>
<organism>
    <name type="scientific">Salmonella enteritidis PT4 (strain P125109)</name>
    <dbReference type="NCBI Taxonomy" id="550537"/>
    <lineage>
        <taxon>Bacteria</taxon>
        <taxon>Pseudomonadati</taxon>
        <taxon>Pseudomonadota</taxon>
        <taxon>Gammaproteobacteria</taxon>
        <taxon>Enterobacterales</taxon>
        <taxon>Enterobacteriaceae</taxon>
        <taxon>Salmonella</taxon>
    </lineage>
</organism>
<keyword id="KW-0238">DNA-binding</keyword>
<keyword id="KW-0678">Repressor</keyword>
<keyword id="KW-0804">Transcription</keyword>
<keyword id="KW-0805">Transcription regulation</keyword>
<accession>B5R0L3</accession>
<protein>
    <recommendedName>
        <fullName evidence="1">HTH-type transcriptional repressor NanR</fullName>
    </recommendedName>
</protein>
<evidence type="ECO:0000255" key="1">
    <source>
        <dbReference type="HAMAP-Rule" id="MF_01236"/>
    </source>
</evidence>
<evidence type="ECO:0000256" key="2">
    <source>
        <dbReference type="SAM" id="MobiDB-lite"/>
    </source>
</evidence>
<reference key="1">
    <citation type="journal article" date="2008" name="Genome Res.">
        <title>Comparative genome analysis of Salmonella enteritidis PT4 and Salmonella gallinarum 287/91 provides insights into evolutionary and host adaptation pathways.</title>
        <authorList>
            <person name="Thomson N.R."/>
            <person name="Clayton D.J."/>
            <person name="Windhorst D."/>
            <person name="Vernikos G."/>
            <person name="Davidson S."/>
            <person name="Churcher C."/>
            <person name="Quail M.A."/>
            <person name="Stevens M."/>
            <person name="Jones M.A."/>
            <person name="Watson M."/>
            <person name="Barron A."/>
            <person name="Layton A."/>
            <person name="Pickard D."/>
            <person name="Kingsley R.A."/>
            <person name="Bignell A."/>
            <person name="Clark L."/>
            <person name="Harris B."/>
            <person name="Ormond D."/>
            <person name="Abdellah Z."/>
            <person name="Brooks K."/>
            <person name="Cherevach I."/>
            <person name="Chillingworth T."/>
            <person name="Woodward J."/>
            <person name="Norberczak H."/>
            <person name="Lord A."/>
            <person name="Arrowsmith C."/>
            <person name="Jagels K."/>
            <person name="Moule S."/>
            <person name="Mungall K."/>
            <person name="Saunders M."/>
            <person name="Whitehead S."/>
            <person name="Chabalgoity J.A."/>
            <person name="Maskell D."/>
            <person name="Humphreys T."/>
            <person name="Roberts M."/>
            <person name="Barrow P.A."/>
            <person name="Dougan G."/>
            <person name="Parkhill J."/>
        </authorList>
    </citation>
    <scope>NUCLEOTIDE SEQUENCE [LARGE SCALE GENOMIC DNA]</scope>
    <source>
        <strain>P125109</strain>
    </source>
</reference>
<feature type="chain" id="PRO_1000139725" description="HTH-type transcriptional repressor NanR">
    <location>
        <begin position="1"/>
        <end position="263"/>
    </location>
</feature>
<feature type="domain" description="HTH gntR-type" evidence="1">
    <location>
        <begin position="30"/>
        <end position="98"/>
    </location>
</feature>
<feature type="DNA-binding region" description="H-T-H motif" evidence="1">
    <location>
        <begin position="58"/>
        <end position="77"/>
    </location>
</feature>
<feature type="region of interest" description="Disordered" evidence="2">
    <location>
        <begin position="1"/>
        <end position="25"/>
    </location>
</feature>
<gene>
    <name evidence="1" type="primary">nanR</name>
    <name type="ordered locus">SEN3173</name>
</gene>